<protein>
    <recommendedName>
        <fullName evidence="1">NH(3)-dependent NAD(+) synthetase</fullName>
        <ecNumber evidence="1">6.3.1.5</ecNumber>
    </recommendedName>
</protein>
<gene>
    <name evidence="1" type="primary">nadE</name>
    <name type="ordered locus">BH2285</name>
</gene>
<sequence length="272" mass="30261">MQQQIIKELHVSQMVEPKEEIRKRVTFLKNYLKHSGAKGYVLGLSGGQDSTLAGKLAQMAIDELNEEEQDTSYVFIAVRLPYGVQKDEADAQDAIAFIKPSRSITVNIKDAVDASTKSFEQATGEVLSDFNKGNTKARERMKAQYDVGAHYGCLVIGTDHAAEAITGFFTKHGDGACDVAPLFGLTKRQGKSLLKELGAPTHLYTKAPTADLEDDRPGLPDEEALGLTYEQLDDYLEGKQVHDAIRKKIESRYLATEHKRQLPVTIFDSWWK</sequence>
<keyword id="KW-0067">ATP-binding</keyword>
<keyword id="KW-0436">Ligase</keyword>
<keyword id="KW-0460">Magnesium</keyword>
<keyword id="KW-0479">Metal-binding</keyword>
<keyword id="KW-0520">NAD</keyword>
<keyword id="KW-0547">Nucleotide-binding</keyword>
<keyword id="KW-1185">Reference proteome</keyword>
<evidence type="ECO:0000255" key="1">
    <source>
        <dbReference type="HAMAP-Rule" id="MF_00193"/>
    </source>
</evidence>
<evidence type="ECO:0000305" key="2"/>
<dbReference type="EC" id="6.3.1.5" evidence="1"/>
<dbReference type="EMBL" id="BA000004">
    <property type="protein sequence ID" value="BAB06004.1"/>
    <property type="molecule type" value="Genomic_DNA"/>
</dbReference>
<dbReference type="PIR" id="E83935">
    <property type="entry name" value="E83935"/>
</dbReference>
<dbReference type="RefSeq" id="WP_010898441.1">
    <property type="nucleotide sequence ID" value="NC_002570.2"/>
</dbReference>
<dbReference type="SMR" id="Q9KAK2"/>
<dbReference type="STRING" id="272558.gene:10728183"/>
<dbReference type="GeneID" id="87597825"/>
<dbReference type="KEGG" id="bha:BH2285"/>
<dbReference type="eggNOG" id="COG0171">
    <property type="taxonomic scope" value="Bacteria"/>
</dbReference>
<dbReference type="HOGENOM" id="CLU_059327_3_0_9"/>
<dbReference type="OrthoDB" id="9803818at2"/>
<dbReference type="UniPathway" id="UPA00253">
    <property type="reaction ID" value="UER00333"/>
</dbReference>
<dbReference type="Proteomes" id="UP000001258">
    <property type="component" value="Chromosome"/>
</dbReference>
<dbReference type="GO" id="GO:0005737">
    <property type="term" value="C:cytoplasm"/>
    <property type="evidence" value="ECO:0007669"/>
    <property type="project" value="InterPro"/>
</dbReference>
<dbReference type="GO" id="GO:0005524">
    <property type="term" value="F:ATP binding"/>
    <property type="evidence" value="ECO:0007669"/>
    <property type="project" value="UniProtKB-UniRule"/>
</dbReference>
<dbReference type="GO" id="GO:0004359">
    <property type="term" value="F:glutaminase activity"/>
    <property type="evidence" value="ECO:0007669"/>
    <property type="project" value="InterPro"/>
</dbReference>
<dbReference type="GO" id="GO:0046872">
    <property type="term" value="F:metal ion binding"/>
    <property type="evidence" value="ECO:0007669"/>
    <property type="project" value="UniProtKB-KW"/>
</dbReference>
<dbReference type="GO" id="GO:0003952">
    <property type="term" value="F:NAD+ synthase (glutamine-hydrolyzing) activity"/>
    <property type="evidence" value="ECO:0007669"/>
    <property type="project" value="InterPro"/>
</dbReference>
<dbReference type="GO" id="GO:0008795">
    <property type="term" value="F:NAD+ synthase activity"/>
    <property type="evidence" value="ECO:0007669"/>
    <property type="project" value="UniProtKB-UniRule"/>
</dbReference>
<dbReference type="GO" id="GO:0009435">
    <property type="term" value="P:NAD biosynthetic process"/>
    <property type="evidence" value="ECO:0007669"/>
    <property type="project" value="UniProtKB-UniRule"/>
</dbReference>
<dbReference type="CDD" id="cd00553">
    <property type="entry name" value="NAD_synthase"/>
    <property type="match status" value="1"/>
</dbReference>
<dbReference type="FunFam" id="3.40.50.620:FF:000015">
    <property type="entry name" value="NH(3)-dependent NAD(+) synthetase"/>
    <property type="match status" value="1"/>
</dbReference>
<dbReference type="Gene3D" id="3.40.50.620">
    <property type="entry name" value="HUPs"/>
    <property type="match status" value="1"/>
</dbReference>
<dbReference type="HAMAP" id="MF_00193">
    <property type="entry name" value="NadE_ammonia_dep"/>
    <property type="match status" value="1"/>
</dbReference>
<dbReference type="InterPro" id="IPR022310">
    <property type="entry name" value="NAD/GMP_synthase"/>
</dbReference>
<dbReference type="InterPro" id="IPR003694">
    <property type="entry name" value="NAD_synthase"/>
</dbReference>
<dbReference type="InterPro" id="IPR022926">
    <property type="entry name" value="NH(3)-dep_NAD(+)_synth"/>
</dbReference>
<dbReference type="InterPro" id="IPR014729">
    <property type="entry name" value="Rossmann-like_a/b/a_fold"/>
</dbReference>
<dbReference type="NCBIfam" id="TIGR00552">
    <property type="entry name" value="nadE"/>
    <property type="match status" value="1"/>
</dbReference>
<dbReference type="NCBIfam" id="NF001979">
    <property type="entry name" value="PRK00768.1"/>
    <property type="match status" value="1"/>
</dbReference>
<dbReference type="PANTHER" id="PTHR23090">
    <property type="entry name" value="NH 3 /GLUTAMINE-DEPENDENT NAD + SYNTHETASE"/>
    <property type="match status" value="1"/>
</dbReference>
<dbReference type="PANTHER" id="PTHR23090:SF7">
    <property type="entry name" value="NH(3)-DEPENDENT NAD(+) SYNTHETASE"/>
    <property type="match status" value="1"/>
</dbReference>
<dbReference type="Pfam" id="PF02540">
    <property type="entry name" value="NAD_synthase"/>
    <property type="match status" value="1"/>
</dbReference>
<dbReference type="SUPFAM" id="SSF52402">
    <property type="entry name" value="Adenine nucleotide alpha hydrolases-like"/>
    <property type="match status" value="1"/>
</dbReference>
<reference key="1">
    <citation type="journal article" date="2000" name="Nucleic Acids Res.">
        <title>Complete genome sequence of the alkaliphilic bacterium Bacillus halodurans and genomic sequence comparison with Bacillus subtilis.</title>
        <authorList>
            <person name="Takami H."/>
            <person name="Nakasone K."/>
            <person name="Takaki Y."/>
            <person name="Maeno G."/>
            <person name="Sasaki R."/>
            <person name="Masui N."/>
            <person name="Fuji F."/>
            <person name="Hirama C."/>
            <person name="Nakamura Y."/>
            <person name="Ogasawara N."/>
            <person name="Kuhara S."/>
            <person name="Horikoshi K."/>
        </authorList>
    </citation>
    <scope>NUCLEOTIDE SEQUENCE [LARGE SCALE GENOMIC DNA]</scope>
    <source>
        <strain>ATCC BAA-125 / DSM 18197 / FERM 7344 / JCM 9153 / C-125</strain>
    </source>
</reference>
<organism>
    <name type="scientific">Halalkalibacterium halodurans (strain ATCC BAA-125 / DSM 18197 / FERM 7344 / JCM 9153 / C-125)</name>
    <name type="common">Bacillus halodurans</name>
    <dbReference type="NCBI Taxonomy" id="272558"/>
    <lineage>
        <taxon>Bacteria</taxon>
        <taxon>Bacillati</taxon>
        <taxon>Bacillota</taxon>
        <taxon>Bacilli</taxon>
        <taxon>Bacillales</taxon>
        <taxon>Bacillaceae</taxon>
        <taxon>Halalkalibacterium (ex Joshi et al. 2022)</taxon>
    </lineage>
</organism>
<feature type="chain" id="PRO_0000152158" description="NH(3)-dependent NAD(+) synthetase">
    <location>
        <begin position="1"/>
        <end position="272"/>
    </location>
</feature>
<feature type="binding site" evidence="1">
    <location>
        <begin position="43"/>
        <end position="50"/>
    </location>
    <ligand>
        <name>ATP</name>
        <dbReference type="ChEBI" id="CHEBI:30616"/>
    </ligand>
</feature>
<feature type="binding site" evidence="1">
    <location>
        <position position="49"/>
    </location>
    <ligand>
        <name>Mg(2+)</name>
        <dbReference type="ChEBI" id="CHEBI:18420"/>
    </ligand>
</feature>
<feature type="binding site" evidence="1">
    <location>
        <position position="138"/>
    </location>
    <ligand>
        <name>deamido-NAD(+)</name>
        <dbReference type="ChEBI" id="CHEBI:58437"/>
    </ligand>
</feature>
<feature type="binding site" evidence="1">
    <location>
        <position position="158"/>
    </location>
    <ligand>
        <name>ATP</name>
        <dbReference type="ChEBI" id="CHEBI:30616"/>
    </ligand>
</feature>
<feature type="binding site" evidence="1">
    <location>
        <position position="163"/>
    </location>
    <ligand>
        <name>Mg(2+)</name>
        <dbReference type="ChEBI" id="CHEBI:18420"/>
    </ligand>
</feature>
<feature type="binding site" evidence="1">
    <location>
        <position position="171"/>
    </location>
    <ligand>
        <name>deamido-NAD(+)</name>
        <dbReference type="ChEBI" id="CHEBI:58437"/>
    </ligand>
</feature>
<feature type="binding site" evidence="1">
    <location>
        <position position="178"/>
    </location>
    <ligand>
        <name>deamido-NAD(+)</name>
        <dbReference type="ChEBI" id="CHEBI:58437"/>
    </ligand>
</feature>
<feature type="binding site" evidence="1">
    <location>
        <position position="187"/>
    </location>
    <ligand>
        <name>ATP</name>
        <dbReference type="ChEBI" id="CHEBI:30616"/>
    </ligand>
</feature>
<feature type="binding site" evidence="1">
    <location>
        <position position="209"/>
    </location>
    <ligand>
        <name>ATP</name>
        <dbReference type="ChEBI" id="CHEBI:30616"/>
    </ligand>
</feature>
<feature type="binding site" evidence="1">
    <location>
        <begin position="258"/>
        <end position="259"/>
    </location>
    <ligand>
        <name>deamido-NAD(+)</name>
        <dbReference type="ChEBI" id="CHEBI:58437"/>
    </ligand>
</feature>
<name>NADE_HALH5</name>
<accession>Q9KAK2</accession>
<comment type="function">
    <text evidence="1">Catalyzes the ATP-dependent amidation of deamido-NAD to form NAD. Uses ammonia as a nitrogen source.</text>
</comment>
<comment type="catalytic activity">
    <reaction evidence="1">
        <text>deamido-NAD(+) + NH4(+) + ATP = AMP + diphosphate + NAD(+) + H(+)</text>
        <dbReference type="Rhea" id="RHEA:21188"/>
        <dbReference type="ChEBI" id="CHEBI:15378"/>
        <dbReference type="ChEBI" id="CHEBI:28938"/>
        <dbReference type="ChEBI" id="CHEBI:30616"/>
        <dbReference type="ChEBI" id="CHEBI:33019"/>
        <dbReference type="ChEBI" id="CHEBI:57540"/>
        <dbReference type="ChEBI" id="CHEBI:58437"/>
        <dbReference type="ChEBI" id="CHEBI:456215"/>
        <dbReference type="EC" id="6.3.1.5"/>
    </reaction>
</comment>
<comment type="pathway">
    <text evidence="1">Cofactor biosynthesis; NAD(+) biosynthesis; NAD(+) from deamido-NAD(+) (ammonia route): step 1/1.</text>
</comment>
<comment type="subunit">
    <text evidence="1">Homodimer.</text>
</comment>
<comment type="similarity">
    <text evidence="1 2">Belongs to the NAD synthetase family.</text>
</comment>
<proteinExistence type="inferred from homology"/>